<proteinExistence type="uncertain"/>
<organism>
    <name type="scientific">Saccharomyces cerevisiae (strain ATCC 204508 / S288c)</name>
    <name type="common">Baker's yeast</name>
    <dbReference type="NCBI Taxonomy" id="559292"/>
    <lineage>
        <taxon>Eukaryota</taxon>
        <taxon>Fungi</taxon>
        <taxon>Dikarya</taxon>
        <taxon>Ascomycota</taxon>
        <taxon>Saccharomycotina</taxon>
        <taxon>Saccharomycetes</taxon>
        <taxon>Saccharomycetales</taxon>
        <taxon>Saccharomycetaceae</taxon>
        <taxon>Saccharomyces</taxon>
    </lineage>
</organism>
<keyword id="KW-0472">Membrane</keyword>
<keyword id="KW-0732">Signal</keyword>
<keyword id="KW-0812">Transmembrane</keyword>
<keyword id="KW-1133">Transmembrane helix</keyword>
<name>YM158_YEAST</name>
<feature type="signal peptide" evidence="1">
    <location>
        <begin position="1"/>
        <end position="27"/>
    </location>
</feature>
<feature type="chain" id="PRO_0000299671" description="Putative uncharacterized protein YMR158W-B">
    <location>
        <begin position="28"/>
        <end position="106"/>
    </location>
</feature>
<feature type="transmembrane region" description="Helical" evidence="1">
    <location>
        <begin position="42"/>
        <end position="62"/>
    </location>
</feature>
<feature type="sequence conflict" description="In Ref. 3; AAT93327." evidence="2" ref="3">
    <original>S</original>
    <variation>N</variation>
    <location>
        <position position="79"/>
    </location>
</feature>
<protein>
    <recommendedName>
        <fullName>Putative uncharacterized protein YMR158W-B</fullName>
    </recommendedName>
</protein>
<evidence type="ECO:0000255" key="1"/>
<evidence type="ECO:0000305" key="2"/>
<evidence type="ECO:0000305" key="3">
    <source>
    </source>
</evidence>
<dbReference type="EMBL" id="Z49705">
    <property type="status" value="NOT_ANNOTATED_CDS"/>
    <property type="molecule type" value="Genomic_DNA"/>
</dbReference>
<dbReference type="EMBL" id="AY693308">
    <property type="protein sequence ID" value="AAT93327.1"/>
    <property type="molecule type" value="Genomic_DNA"/>
</dbReference>
<dbReference type="IntAct" id="Q6B0X2">
    <property type="interactions" value="5"/>
</dbReference>
<dbReference type="STRING" id="4932.YMR158W-B"/>
<dbReference type="PaxDb" id="4932-YMR158W-B"/>
<dbReference type="EnsemblFungi" id="YMR158W-B_mRNA">
    <property type="protein sequence ID" value="YMR158W-B"/>
    <property type="gene ID" value="YMR158W-B"/>
</dbReference>
<dbReference type="AGR" id="SGD:S000004768"/>
<dbReference type="SGD" id="S000004768">
    <property type="gene designation" value="YMR158W-B"/>
</dbReference>
<dbReference type="HOGENOM" id="CLU_2225296_0_0_1"/>
<dbReference type="GO" id="GO:0016020">
    <property type="term" value="C:membrane"/>
    <property type="evidence" value="ECO:0007669"/>
    <property type="project" value="UniProtKB-SubCell"/>
</dbReference>
<sequence length="106" mass="11980">MHHFVPSISLFMASVSFSVFFSHLATSWECSFFRSESFCCKTLFSMVPLINSSFNLSVFLFFNAITSFNLRISCSLLFSSFCRIASVFNKASSWLTMLPPMAPLLS</sequence>
<reference key="1">
    <citation type="journal article" date="1997" name="Nature">
        <title>The nucleotide sequence of Saccharomyces cerevisiae chromosome XIII.</title>
        <authorList>
            <person name="Bowman S."/>
            <person name="Churcher C.M."/>
            <person name="Badcock K."/>
            <person name="Brown D."/>
            <person name="Chillingworth T."/>
            <person name="Connor R."/>
            <person name="Dedman K."/>
            <person name="Devlin K."/>
            <person name="Gentles S."/>
            <person name="Hamlin N."/>
            <person name="Hunt S."/>
            <person name="Jagels K."/>
            <person name="Lye G."/>
            <person name="Moule S."/>
            <person name="Odell C."/>
            <person name="Pearson D."/>
            <person name="Rajandream M.A."/>
            <person name="Rice P."/>
            <person name="Skelton J."/>
            <person name="Walsh S.V."/>
            <person name="Whitehead S."/>
            <person name="Barrell B.G."/>
        </authorList>
    </citation>
    <scope>NUCLEOTIDE SEQUENCE [LARGE SCALE GENOMIC DNA]</scope>
    <source>
        <strain>ATCC 204508 / S288c</strain>
    </source>
</reference>
<reference key="2">
    <citation type="journal article" date="2014" name="G3 (Bethesda)">
        <title>The reference genome sequence of Saccharomyces cerevisiae: Then and now.</title>
        <authorList>
            <person name="Engel S.R."/>
            <person name="Dietrich F.S."/>
            <person name="Fisk D.G."/>
            <person name="Binkley G."/>
            <person name="Balakrishnan R."/>
            <person name="Costanzo M.C."/>
            <person name="Dwight S.S."/>
            <person name="Hitz B.C."/>
            <person name="Karra K."/>
            <person name="Nash R.S."/>
            <person name="Weng S."/>
            <person name="Wong E.D."/>
            <person name="Lloyd P."/>
            <person name="Skrzypek M.S."/>
            <person name="Miyasato S.R."/>
            <person name="Simison M."/>
            <person name="Cherry J.M."/>
        </authorList>
    </citation>
    <scope>GENOME REANNOTATION</scope>
    <source>
        <strain>ATCC 204508 / S288c</strain>
    </source>
</reference>
<reference key="3">
    <citation type="journal article" date="2007" name="Genome Res.">
        <title>Approaching a complete repository of sequence-verified protein-encoding clones for Saccharomyces cerevisiae.</title>
        <authorList>
            <person name="Hu Y."/>
            <person name="Rolfs A."/>
            <person name="Bhullar B."/>
            <person name="Murthy T.V.S."/>
            <person name="Zhu C."/>
            <person name="Berger M.F."/>
            <person name="Camargo A.A."/>
            <person name="Kelley F."/>
            <person name="McCarron S."/>
            <person name="Jepson D."/>
            <person name="Richardson A."/>
            <person name="Raphael J."/>
            <person name="Moreira D."/>
            <person name="Taycher E."/>
            <person name="Zuo D."/>
            <person name="Mohr S."/>
            <person name="Kane M.F."/>
            <person name="Williamson J."/>
            <person name="Simpson A.J.G."/>
            <person name="Bulyk M.L."/>
            <person name="Harlow E."/>
            <person name="Marsischky G."/>
            <person name="Kolodner R.D."/>
            <person name="LaBaer J."/>
        </authorList>
    </citation>
    <scope>NUCLEOTIDE SEQUENCE [GENOMIC DNA]</scope>
    <source>
        <strain>ATCC 204508 / S288c</strain>
    </source>
</reference>
<accession>Q6B0X2</accession>
<comment type="subcellular location">
    <subcellularLocation>
        <location evidence="2">Membrane</location>
        <topology evidence="2">Single-pass membrane protein</topology>
    </subcellularLocation>
</comment>
<comment type="miscellaneous">
    <text evidence="2">Overlaps ATG16.</text>
</comment>
<comment type="caution">
    <text evidence="3">Product of a dubious gene prediction unlikely to encode a functional protein. Because of that it is not part of the S.cerevisiae S288c complete/reference proteome set.</text>
</comment>
<gene>
    <name type="ordered locus">YMR158W-B</name>
    <name type="ORF">YMR158W-A</name>
</gene>